<evidence type="ECO:0000250" key="1">
    <source>
        <dbReference type="UniProtKB" id="P76578"/>
    </source>
</evidence>
<evidence type="ECO:0000255" key="2"/>
<evidence type="ECO:0000305" key="3"/>
<dbReference type="EMBL" id="AE006914">
    <property type="protein sequence ID" value="AAL03373.1"/>
    <property type="molecule type" value="Genomic_DNA"/>
</dbReference>
<dbReference type="PIR" id="C97804">
    <property type="entry name" value="C97804"/>
</dbReference>
<dbReference type="RefSeq" id="WP_010977442.1">
    <property type="nucleotide sequence ID" value="NC_003103.1"/>
</dbReference>
<dbReference type="SMR" id="Q92HD6"/>
<dbReference type="GeneID" id="927798"/>
<dbReference type="KEGG" id="rco:RC0835"/>
<dbReference type="PATRIC" id="fig|272944.4.peg.952"/>
<dbReference type="HOGENOM" id="CLU_000965_2_0_5"/>
<dbReference type="Proteomes" id="UP000000816">
    <property type="component" value="Chromosome"/>
</dbReference>
<dbReference type="GO" id="GO:0004866">
    <property type="term" value="F:endopeptidase inhibitor activity"/>
    <property type="evidence" value="ECO:0007669"/>
    <property type="project" value="InterPro"/>
</dbReference>
<dbReference type="CDD" id="cd02891">
    <property type="entry name" value="A2M_like"/>
    <property type="match status" value="1"/>
</dbReference>
<dbReference type="Gene3D" id="1.50.10.20">
    <property type="match status" value="1"/>
</dbReference>
<dbReference type="Gene3D" id="2.60.40.1930">
    <property type="match status" value="1"/>
</dbReference>
<dbReference type="InterPro" id="IPR011625">
    <property type="entry name" value="A2M_N_BRD"/>
</dbReference>
<dbReference type="InterPro" id="IPR021868">
    <property type="entry name" value="Alpha_2_Macroglob_MG3"/>
</dbReference>
<dbReference type="InterPro" id="IPR041203">
    <property type="entry name" value="Bact_A2M_MG5"/>
</dbReference>
<dbReference type="InterPro" id="IPR041462">
    <property type="entry name" value="Bact_A2M_MG6"/>
</dbReference>
<dbReference type="InterPro" id="IPR041246">
    <property type="entry name" value="Bact_MG10"/>
</dbReference>
<dbReference type="InterPro" id="IPR001599">
    <property type="entry name" value="Macroglobln_a2"/>
</dbReference>
<dbReference type="InterPro" id="IPR002890">
    <property type="entry name" value="MG2"/>
</dbReference>
<dbReference type="InterPro" id="IPR008930">
    <property type="entry name" value="Terpenoid_cyclase/PrenylTrfase"/>
</dbReference>
<dbReference type="InterPro" id="IPR051802">
    <property type="entry name" value="YfhM-like"/>
</dbReference>
<dbReference type="PANTHER" id="PTHR40094">
    <property type="entry name" value="ALPHA-2-MACROGLOBULIN HOMOLOG"/>
    <property type="match status" value="1"/>
</dbReference>
<dbReference type="PANTHER" id="PTHR40094:SF1">
    <property type="entry name" value="UBIQUITIN DOMAIN-CONTAINING PROTEIN"/>
    <property type="match status" value="1"/>
</dbReference>
<dbReference type="Pfam" id="PF00207">
    <property type="entry name" value="A2M"/>
    <property type="match status" value="1"/>
</dbReference>
<dbReference type="Pfam" id="PF07703">
    <property type="entry name" value="A2M_BRD"/>
    <property type="match status" value="1"/>
</dbReference>
<dbReference type="Pfam" id="PF17973">
    <property type="entry name" value="bMG10"/>
    <property type="match status" value="1"/>
</dbReference>
<dbReference type="Pfam" id="PF11974">
    <property type="entry name" value="bMG3"/>
    <property type="match status" value="1"/>
</dbReference>
<dbReference type="Pfam" id="PF17972">
    <property type="entry name" value="bMG5"/>
    <property type="match status" value="1"/>
</dbReference>
<dbReference type="Pfam" id="PF17962">
    <property type="entry name" value="bMG6"/>
    <property type="match status" value="1"/>
</dbReference>
<dbReference type="Pfam" id="PF01835">
    <property type="entry name" value="MG2"/>
    <property type="match status" value="1"/>
</dbReference>
<dbReference type="SMART" id="SM01360">
    <property type="entry name" value="A2M"/>
    <property type="match status" value="1"/>
</dbReference>
<dbReference type="SMART" id="SM01359">
    <property type="entry name" value="A2M_N_2"/>
    <property type="match status" value="1"/>
</dbReference>
<dbReference type="SUPFAM" id="SSF48239">
    <property type="entry name" value="Terpenoid cyclases/Protein prenyltransferases"/>
    <property type="match status" value="1"/>
</dbReference>
<keyword id="KW-0646">Protease inhibitor</keyword>
<keyword id="KW-0732">Signal</keyword>
<keyword id="KW-0882">Thioester bond</keyword>
<sequence length="1892" mass="213784">MKNIFRKFVFTIFVCLINLQLIAASFNEKIPLYFKLTNENLLAGQNALNIDLCDSRIKEWCTKPQRELGLNGKKINDYISISPDIKGEWRFGWWYNINFTPESNFVAHQTYKITIEDYIFPNFVGLKSNNISFTTLPLLPIIKEMNYLQDNIDISKKFVQTKIAFNYPIDPKTLEERIEFIKSSTKEKLPFSIKFNTNNTEATIITNIPPLTDKEDTISVIIKDGVKPLHGGEVFTYKNVKDPNNKTPNNIRYSYKENVLIPSLSSYLKITNSTATIVKDDKLKPEQIIIITTNTPVSGEEIKKHLELFLLPQDKPAFLGVAGKKNYKWQNPKEITDDILKSSEKINFELLSSVPSITTMHSFKVDTFASRALLVKVNQGVKTSDNLTLGSDYFQIVQIPDNPKEVKLMSDGSILSLAGKRKLPVYSLGIDKLYLEIDRINQQEVNHLISQTNRYNIFQNPTFINEYTFNEYNISEVFQEEVIVNSQNLNLPHYTDLDFSKYFNLEEAGSYSKGLFLAKVYAKDNNNIISQDKRLILVTDLGCIVKTDKTGTHHIFVSYISNGKPAGGVKADIIGLNGEVLVSSKTDSKGHAVLSNINDFSKEKTPVAYILTTKDDFAFMPYSRIDRQVNYSRFDVAGAVSSDQGLKAYLFSDRGIYRPNEQGHIGIMLKQTDWQGKFDGLPLEIQVTNPRGKVIDKSKIVLDAEGFGEYLFSTLDDALTGLYNISLYLVGDKGSNNYLNSVSVRVGDFQPDRMKININFNNSQDELWTNPKDLKATVNLINLYGTPAENRKVSGFIDIRPTEFFVPRFKEYKFYSSKGNKEFFYERLGDITTDSKGTANFDLNLEKYYNATFNLTFSAEGFEPDSGRSVNASKSLIVSPLPYIIGFRSDSDLKYIKTKTSAAIEFIAISNKAEKVAAPNLTLNLKKINYVNNLVADSNGNYSYSSVPIETNISSDKINITANESYIYKVPTKEAGDYVIYLTDKEDTIFAQAEFSVIGEGNVTANLTDKANLKVKLDKDDYTAGDTILLNIITPYTGYGLITIETDKVHNFEWFKADENNSIQEIKIPDGFEGKGYVNVQFIRDIEATEIFISPFSYAVVPFTAGIYKHKQDIGLTLPAKIKSGEKLAIRYRTTNPGKIIIFAVDAGILSFAGYQTPDPLNYFINDKALEVRTSQIMDLILPERPLLMKAYMAAPAGDGCINVARNLNPFKRKSQPPIAFWSGILEADLDEREVTFDIPSYFNGTLRVIGVASSLDSIGTSKADLLVQSDLIINPNLPLFVAPNDEFTVPVTIFNNLKDSGNAQVFLNIETSEGLKILDYPKEIPIDENKEATINVKLKATDQLGSADLKVVASINHLKPDIISMAVVHSSELTSTTSVRPASPSVTTVNTGFITDNKANLKILRDVYPEFAKLQISASKSPLAIISGFKDFLDNYPYGCTEQLISQNFANILLYNEQELVQILKTDRKNMDESLSKIFQTLSERQNYDGGFRYWNNFNDDSDPFISVYAMHFLSEGATRYLAVPSDTFNQGIYYLENMANRSINSLDEAREKAYAVYILTQNSVITTSYIANILKYLDEYHKNTWQDDLTSVYLAASYKMLQMNEEAEKLLDRFTLNKPISKTDYQYYNPLIKYSQYLYLIAMHFPERLKDFDPKIVQDIALFAKDNYNSLSASYAIMASLAYADKINHVDEATIKVTSTDKEVTLKGNKVMIAELSVENKNIDLTSSSNGFFYQLLTSGYDKQLTENKEIVKGIEITKKYLDENNKEVSKVKLGDNITVEITMRSGSNKTLSNMVLIDLLPAGFELLPDNNHINILERTQEVMIWKPIYINNRDDRVMIFGTISDQKMTYQYKIKAVNKGIFSTPAIYSEAMYDPQTYYRGVIGNIIVE</sequence>
<gene>
    <name type="ordered locus">RC0835</name>
</gene>
<accession>Q92HD6</accession>
<organism>
    <name type="scientific">Rickettsia conorii (strain ATCC VR-613 / Malish 7)</name>
    <dbReference type="NCBI Taxonomy" id="272944"/>
    <lineage>
        <taxon>Bacteria</taxon>
        <taxon>Pseudomonadati</taxon>
        <taxon>Pseudomonadota</taxon>
        <taxon>Alphaproteobacteria</taxon>
        <taxon>Rickettsiales</taxon>
        <taxon>Rickettsiaceae</taxon>
        <taxon>Rickettsieae</taxon>
        <taxon>Rickettsia</taxon>
        <taxon>spotted fever group</taxon>
    </lineage>
</organism>
<name>A2MG_RICCN</name>
<protein>
    <recommendedName>
        <fullName evidence="1">Alpha-2-macroglobulin</fullName>
    </recommendedName>
</protein>
<comment type="function">
    <text evidence="1">Protects the bacterial cell from host peptidases.</text>
</comment>
<comment type="similarity">
    <text evidence="3">Belongs to the protease inhibitor I39 (alpha-2-macroglobulin) family. Bacterial alpha-2-macroglobulin subfamily.</text>
</comment>
<reference key="1">
    <citation type="journal article" date="2001" name="Science">
        <title>Mechanisms of evolution in Rickettsia conorii and R. prowazekii.</title>
        <authorList>
            <person name="Ogata H."/>
            <person name="Audic S."/>
            <person name="Renesto-Audiffren P."/>
            <person name="Fournier P.-E."/>
            <person name="Barbe V."/>
            <person name="Samson D."/>
            <person name="Roux V."/>
            <person name="Cossart P."/>
            <person name="Weissenbach J."/>
            <person name="Claverie J.-M."/>
            <person name="Raoult D."/>
        </authorList>
    </citation>
    <scope>NUCLEOTIDE SEQUENCE [LARGE SCALE GENOMIC DNA]</scope>
    <source>
        <strain>ATCC VR-613 / Malish 7</strain>
    </source>
</reference>
<feature type="signal peptide" evidence="2">
    <location>
        <begin position="1"/>
        <end position="23"/>
    </location>
</feature>
<feature type="chain" id="PRO_0000036244" description="Alpha-2-macroglobulin">
    <location>
        <begin position="24"/>
        <end position="1892"/>
    </location>
</feature>
<feature type="cross-link" description="Isoglutamyl cysteine thioester (Cys-Gln)" evidence="1">
    <location>
        <begin position="1441"/>
        <end position="1444"/>
    </location>
</feature>
<proteinExistence type="inferred from homology"/>